<sequence length="188" mass="20591">MATYYSNDFRAGLKIMLDGEPYAVEASEFVKPGKGQAFARVKLRRLLTGTRVEKTFKSTDSAEGADVVDMNLTYLYNDGEFWHFMNNETFEQLSADAKAIGDNAKWLLDQAECIVTLWNGQPISVTPPNFVELEIVDTDPGLKGDTAGTGGKPATLSTGAVVKVPLFVQIGEVIKVDTRSGEYVSRVK</sequence>
<protein>
    <recommendedName>
        <fullName evidence="1">Elongation factor P</fullName>
        <shortName evidence="1">EF-P</shortName>
    </recommendedName>
</protein>
<keyword id="KW-0963">Cytoplasm</keyword>
<keyword id="KW-0251">Elongation factor</keyword>
<keyword id="KW-0379">Hydroxylation</keyword>
<keyword id="KW-0648">Protein biosynthesis</keyword>
<gene>
    <name evidence="1" type="primary">efp</name>
    <name type="ordered locus">ECED1_4935</name>
</gene>
<dbReference type="EMBL" id="CU928162">
    <property type="protein sequence ID" value="CAR10892.1"/>
    <property type="molecule type" value="Genomic_DNA"/>
</dbReference>
<dbReference type="RefSeq" id="WP_000257278.1">
    <property type="nucleotide sequence ID" value="NC_011745.1"/>
</dbReference>
<dbReference type="SMR" id="B7MSG8"/>
<dbReference type="GeneID" id="93777677"/>
<dbReference type="KEGG" id="ecq:ECED1_4935"/>
<dbReference type="HOGENOM" id="CLU_074944_0_0_6"/>
<dbReference type="UniPathway" id="UPA00345"/>
<dbReference type="Proteomes" id="UP000000748">
    <property type="component" value="Chromosome"/>
</dbReference>
<dbReference type="GO" id="GO:0005829">
    <property type="term" value="C:cytosol"/>
    <property type="evidence" value="ECO:0007669"/>
    <property type="project" value="UniProtKB-ARBA"/>
</dbReference>
<dbReference type="GO" id="GO:0003746">
    <property type="term" value="F:translation elongation factor activity"/>
    <property type="evidence" value="ECO:0007669"/>
    <property type="project" value="UniProtKB-UniRule"/>
</dbReference>
<dbReference type="GO" id="GO:0043043">
    <property type="term" value="P:peptide biosynthetic process"/>
    <property type="evidence" value="ECO:0007669"/>
    <property type="project" value="InterPro"/>
</dbReference>
<dbReference type="CDD" id="cd04470">
    <property type="entry name" value="S1_EF-P_repeat_1"/>
    <property type="match status" value="1"/>
</dbReference>
<dbReference type="CDD" id="cd05794">
    <property type="entry name" value="S1_EF-P_repeat_2"/>
    <property type="match status" value="1"/>
</dbReference>
<dbReference type="FunFam" id="2.30.30.30:FF:000003">
    <property type="entry name" value="Elongation factor P"/>
    <property type="match status" value="1"/>
</dbReference>
<dbReference type="FunFam" id="2.40.50.140:FF:000004">
    <property type="entry name" value="Elongation factor P"/>
    <property type="match status" value="1"/>
</dbReference>
<dbReference type="FunFam" id="2.40.50.140:FF:000009">
    <property type="entry name" value="Elongation factor P"/>
    <property type="match status" value="1"/>
</dbReference>
<dbReference type="Gene3D" id="2.30.30.30">
    <property type="match status" value="1"/>
</dbReference>
<dbReference type="Gene3D" id="2.40.50.140">
    <property type="entry name" value="Nucleic acid-binding proteins"/>
    <property type="match status" value="2"/>
</dbReference>
<dbReference type="HAMAP" id="MF_00141">
    <property type="entry name" value="EF_P"/>
    <property type="match status" value="1"/>
</dbReference>
<dbReference type="InterPro" id="IPR015365">
    <property type="entry name" value="Elong-fact-P_C"/>
</dbReference>
<dbReference type="InterPro" id="IPR012340">
    <property type="entry name" value="NA-bd_OB-fold"/>
</dbReference>
<dbReference type="InterPro" id="IPR014722">
    <property type="entry name" value="Rib_uL2_dom2"/>
</dbReference>
<dbReference type="InterPro" id="IPR020599">
    <property type="entry name" value="Transl_elong_fac_P/YeiP"/>
</dbReference>
<dbReference type="InterPro" id="IPR013185">
    <property type="entry name" value="Transl_elong_KOW-like"/>
</dbReference>
<dbReference type="InterPro" id="IPR001059">
    <property type="entry name" value="Transl_elong_P/YeiP_cen"/>
</dbReference>
<dbReference type="InterPro" id="IPR013852">
    <property type="entry name" value="Transl_elong_P/YeiP_CS"/>
</dbReference>
<dbReference type="InterPro" id="IPR011768">
    <property type="entry name" value="Transl_elongation_fac_P"/>
</dbReference>
<dbReference type="InterPro" id="IPR008991">
    <property type="entry name" value="Translation_prot_SH3-like_sf"/>
</dbReference>
<dbReference type="NCBIfam" id="TIGR00038">
    <property type="entry name" value="efp"/>
    <property type="match status" value="1"/>
</dbReference>
<dbReference type="NCBIfam" id="NF001810">
    <property type="entry name" value="PRK00529.1"/>
    <property type="match status" value="1"/>
</dbReference>
<dbReference type="PANTHER" id="PTHR30053">
    <property type="entry name" value="ELONGATION FACTOR P"/>
    <property type="match status" value="1"/>
</dbReference>
<dbReference type="PANTHER" id="PTHR30053:SF12">
    <property type="entry name" value="ELONGATION FACTOR P (EF-P) FAMILY PROTEIN"/>
    <property type="match status" value="1"/>
</dbReference>
<dbReference type="Pfam" id="PF01132">
    <property type="entry name" value="EFP"/>
    <property type="match status" value="1"/>
</dbReference>
<dbReference type="Pfam" id="PF08207">
    <property type="entry name" value="EFP_N"/>
    <property type="match status" value="1"/>
</dbReference>
<dbReference type="Pfam" id="PF09285">
    <property type="entry name" value="Elong-fact-P_C"/>
    <property type="match status" value="1"/>
</dbReference>
<dbReference type="PIRSF" id="PIRSF005901">
    <property type="entry name" value="EF-P"/>
    <property type="match status" value="1"/>
</dbReference>
<dbReference type="SMART" id="SM01185">
    <property type="entry name" value="EFP"/>
    <property type="match status" value="1"/>
</dbReference>
<dbReference type="SMART" id="SM00841">
    <property type="entry name" value="Elong-fact-P_C"/>
    <property type="match status" value="1"/>
</dbReference>
<dbReference type="SUPFAM" id="SSF50249">
    <property type="entry name" value="Nucleic acid-binding proteins"/>
    <property type="match status" value="2"/>
</dbReference>
<dbReference type="SUPFAM" id="SSF50104">
    <property type="entry name" value="Translation proteins SH3-like domain"/>
    <property type="match status" value="1"/>
</dbReference>
<dbReference type="PROSITE" id="PS01275">
    <property type="entry name" value="EFP"/>
    <property type="match status" value="1"/>
</dbReference>
<organism>
    <name type="scientific">Escherichia coli O81 (strain ED1a)</name>
    <dbReference type="NCBI Taxonomy" id="585397"/>
    <lineage>
        <taxon>Bacteria</taxon>
        <taxon>Pseudomonadati</taxon>
        <taxon>Pseudomonadota</taxon>
        <taxon>Gammaproteobacteria</taxon>
        <taxon>Enterobacterales</taxon>
        <taxon>Enterobacteriaceae</taxon>
        <taxon>Escherichia</taxon>
    </lineage>
</organism>
<proteinExistence type="inferred from homology"/>
<feature type="chain" id="PRO_1000123010" description="Elongation factor P">
    <location>
        <begin position="1"/>
        <end position="188"/>
    </location>
</feature>
<feature type="modified residue" description="N6-(3,6-diaminohexanoyl)-5-hydroxylysine" evidence="1">
    <location>
        <position position="34"/>
    </location>
</feature>
<evidence type="ECO:0000255" key="1">
    <source>
        <dbReference type="HAMAP-Rule" id="MF_00141"/>
    </source>
</evidence>
<accession>B7MSG8</accession>
<reference key="1">
    <citation type="journal article" date="2009" name="PLoS Genet.">
        <title>Organised genome dynamics in the Escherichia coli species results in highly diverse adaptive paths.</title>
        <authorList>
            <person name="Touchon M."/>
            <person name="Hoede C."/>
            <person name="Tenaillon O."/>
            <person name="Barbe V."/>
            <person name="Baeriswyl S."/>
            <person name="Bidet P."/>
            <person name="Bingen E."/>
            <person name="Bonacorsi S."/>
            <person name="Bouchier C."/>
            <person name="Bouvet O."/>
            <person name="Calteau A."/>
            <person name="Chiapello H."/>
            <person name="Clermont O."/>
            <person name="Cruveiller S."/>
            <person name="Danchin A."/>
            <person name="Diard M."/>
            <person name="Dossat C."/>
            <person name="Karoui M.E."/>
            <person name="Frapy E."/>
            <person name="Garry L."/>
            <person name="Ghigo J.M."/>
            <person name="Gilles A.M."/>
            <person name="Johnson J."/>
            <person name="Le Bouguenec C."/>
            <person name="Lescat M."/>
            <person name="Mangenot S."/>
            <person name="Martinez-Jehanne V."/>
            <person name="Matic I."/>
            <person name="Nassif X."/>
            <person name="Oztas S."/>
            <person name="Petit M.A."/>
            <person name="Pichon C."/>
            <person name="Rouy Z."/>
            <person name="Ruf C.S."/>
            <person name="Schneider D."/>
            <person name="Tourret J."/>
            <person name="Vacherie B."/>
            <person name="Vallenet D."/>
            <person name="Medigue C."/>
            <person name="Rocha E.P.C."/>
            <person name="Denamur E."/>
        </authorList>
    </citation>
    <scope>NUCLEOTIDE SEQUENCE [LARGE SCALE GENOMIC DNA]</scope>
    <source>
        <strain>ED1a</strain>
    </source>
</reference>
<comment type="function">
    <text evidence="1">Involved in peptide bond synthesis. Alleviates ribosome stalling that occurs when 3 or more consecutive Pro residues or the sequence PPG is present in a protein, possibly by augmenting the peptidyl transferase activity of the ribosome. Modification of Lys-34 is required for alleviation.</text>
</comment>
<comment type="pathway">
    <text evidence="1">Protein biosynthesis; polypeptide chain elongation.</text>
</comment>
<comment type="subcellular location">
    <subcellularLocation>
        <location evidence="1">Cytoplasm</location>
    </subcellularLocation>
</comment>
<comment type="PTM">
    <text evidence="1">Is beta-lysylated on the epsilon-amino group of Lys-34 by the combined action of EpmA and EpmB, and then hydroxylated on the C5 position of the same residue by EpmC. Lysylation is critical for the stimulatory effect of EF-P on peptide-bond formation. The lysylation moiety would extend toward the peptidyltransferase center and stabilize the terminal 3-CCA end of the tRNA. The hydroxylation of the C5 position on Lys-34 would allow additional potential stabilizing hydrogen-bond interactions with the P-tRNA.</text>
</comment>
<comment type="similarity">
    <text evidence="1">Belongs to the elongation factor P family.</text>
</comment>
<name>EFP_ECO81</name>